<protein>
    <recommendedName>
        <fullName evidence="1">Large ribosomal subunit protein uL5</fullName>
    </recommendedName>
    <alternativeName>
        <fullName evidence="2">50S ribosomal protein L5</fullName>
    </alternativeName>
</protein>
<sequence>MARLQDQYREKIAPALIEKFGYTTPMQVPRITKITLNMGVSEAVADKKVMDNAVADMAKIAGQKPVVTKAKKAIAGFKIREDLPIGCMVTLRGVQMYEFLDRFVTVALPRVRDFRGISGRAFDGRGNYNIGVKEQIIFPEIEYDKVDALRGLNISITTTAKTDEECKALLTAFRFPFKN</sequence>
<reference key="1">
    <citation type="journal article" date="2009" name="Environ. Microbiol.">
        <title>The genome of Polaromonas naphthalenivorans strain CJ2, isolated from coal tar-contaminated sediment, reveals physiological and metabolic versatility and evolution through extensive horizontal gene transfer.</title>
        <authorList>
            <person name="Yagi J.M."/>
            <person name="Sims D."/>
            <person name="Brettin T."/>
            <person name="Bruce D."/>
            <person name="Madsen E.L."/>
        </authorList>
    </citation>
    <scope>NUCLEOTIDE SEQUENCE [LARGE SCALE GENOMIC DNA]</scope>
    <source>
        <strain>CJ2</strain>
    </source>
</reference>
<organism>
    <name type="scientific">Polaromonas naphthalenivorans (strain CJ2)</name>
    <dbReference type="NCBI Taxonomy" id="365044"/>
    <lineage>
        <taxon>Bacteria</taxon>
        <taxon>Pseudomonadati</taxon>
        <taxon>Pseudomonadota</taxon>
        <taxon>Betaproteobacteria</taxon>
        <taxon>Burkholderiales</taxon>
        <taxon>Comamonadaceae</taxon>
        <taxon>Polaromonas</taxon>
    </lineage>
</organism>
<comment type="function">
    <text evidence="1">This is one of the proteins that bind and probably mediate the attachment of the 5S RNA into the large ribosomal subunit, where it forms part of the central protuberance. In the 70S ribosome it contacts protein S13 of the 30S subunit (bridge B1b), connecting the 2 subunits; this bridge is implicated in subunit movement. Contacts the P site tRNA; the 5S rRNA and some of its associated proteins might help stabilize positioning of ribosome-bound tRNAs.</text>
</comment>
<comment type="subunit">
    <text evidence="1">Part of the 50S ribosomal subunit; part of the 5S rRNA/L5/L18/L25 subcomplex. Contacts the 5S rRNA and the P site tRNA. Forms a bridge to the 30S subunit in the 70S ribosome.</text>
</comment>
<comment type="similarity">
    <text evidence="1">Belongs to the universal ribosomal protein uL5 family.</text>
</comment>
<accession>A1VJ27</accession>
<feature type="chain" id="PRO_1000052791" description="Large ribosomal subunit protein uL5">
    <location>
        <begin position="1"/>
        <end position="179"/>
    </location>
</feature>
<name>RL5_POLNA</name>
<keyword id="KW-1185">Reference proteome</keyword>
<keyword id="KW-0687">Ribonucleoprotein</keyword>
<keyword id="KW-0689">Ribosomal protein</keyword>
<keyword id="KW-0694">RNA-binding</keyword>
<keyword id="KW-0699">rRNA-binding</keyword>
<keyword id="KW-0820">tRNA-binding</keyword>
<dbReference type="EMBL" id="CP000529">
    <property type="protein sequence ID" value="ABM35655.1"/>
    <property type="molecule type" value="Genomic_DNA"/>
</dbReference>
<dbReference type="RefSeq" id="WP_011799761.1">
    <property type="nucleotide sequence ID" value="NC_008781.1"/>
</dbReference>
<dbReference type="SMR" id="A1VJ27"/>
<dbReference type="STRING" id="365044.Pnap_0332"/>
<dbReference type="KEGG" id="pna:Pnap_0332"/>
<dbReference type="eggNOG" id="COG0094">
    <property type="taxonomic scope" value="Bacteria"/>
</dbReference>
<dbReference type="HOGENOM" id="CLU_061015_2_1_4"/>
<dbReference type="OrthoDB" id="9806626at2"/>
<dbReference type="Proteomes" id="UP000000644">
    <property type="component" value="Chromosome"/>
</dbReference>
<dbReference type="GO" id="GO:1990904">
    <property type="term" value="C:ribonucleoprotein complex"/>
    <property type="evidence" value="ECO:0007669"/>
    <property type="project" value="UniProtKB-KW"/>
</dbReference>
<dbReference type="GO" id="GO:0005840">
    <property type="term" value="C:ribosome"/>
    <property type="evidence" value="ECO:0007669"/>
    <property type="project" value="UniProtKB-KW"/>
</dbReference>
<dbReference type="GO" id="GO:0019843">
    <property type="term" value="F:rRNA binding"/>
    <property type="evidence" value="ECO:0007669"/>
    <property type="project" value="UniProtKB-UniRule"/>
</dbReference>
<dbReference type="GO" id="GO:0003735">
    <property type="term" value="F:structural constituent of ribosome"/>
    <property type="evidence" value="ECO:0007669"/>
    <property type="project" value="InterPro"/>
</dbReference>
<dbReference type="GO" id="GO:0000049">
    <property type="term" value="F:tRNA binding"/>
    <property type="evidence" value="ECO:0007669"/>
    <property type="project" value="UniProtKB-UniRule"/>
</dbReference>
<dbReference type="GO" id="GO:0006412">
    <property type="term" value="P:translation"/>
    <property type="evidence" value="ECO:0007669"/>
    <property type="project" value="UniProtKB-UniRule"/>
</dbReference>
<dbReference type="FunFam" id="3.30.1440.10:FF:000001">
    <property type="entry name" value="50S ribosomal protein L5"/>
    <property type="match status" value="1"/>
</dbReference>
<dbReference type="Gene3D" id="3.30.1440.10">
    <property type="match status" value="1"/>
</dbReference>
<dbReference type="HAMAP" id="MF_01333_B">
    <property type="entry name" value="Ribosomal_uL5_B"/>
    <property type="match status" value="1"/>
</dbReference>
<dbReference type="InterPro" id="IPR002132">
    <property type="entry name" value="Ribosomal_uL5"/>
</dbReference>
<dbReference type="InterPro" id="IPR020930">
    <property type="entry name" value="Ribosomal_uL5_bac-type"/>
</dbReference>
<dbReference type="InterPro" id="IPR031309">
    <property type="entry name" value="Ribosomal_uL5_C"/>
</dbReference>
<dbReference type="InterPro" id="IPR020929">
    <property type="entry name" value="Ribosomal_uL5_CS"/>
</dbReference>
<dbReference type="InterPro" id="IPR022803">
    <property type="entry name" value="Ribosomal_uL5_dom_sf"/>
</dbReference>
<dbReference type="InterPro" id="IPR031310">
    <property type="entry name" value="Ribosomal_uL5_N"/>
</dbReference>
<dbReference type="NCBIfam" id="NF000585">
    <property type="entry name" value="PRK00010.1"/>
    <property type="match status" value="1"/>
</dbReference>
<dbReference type="PANTHER" id="PTHR11994">
    <property type="entry name" value="60S RIBOSOMAL PROTEIN L11-RELATED"/>
    <property type="match status" value="1"/>
</dbReference>
<dbReference type="Pfam" id="PF00281">
    <property type="entry name" value="Ribosomal_L5"/>
    <property type="match status" value="1"/>
</dbReference>
<dbReference type="Pfam" id="PF00673">
    <property type="entry name" value="Ribosomal_L5_C"/>
    <property type="match status" value="1"/>
</dbReference>
<dbReference type="PIRSF" id="PIRSF002161">
    <property type="entry name" value="Ribosomal_L5"/>
    <property type="match status" value="1"/>
</dbReference>
<dbReference type="SUPFAM" id="SSF55282">
    <property type="entry name" value="RL5-like"/>
    <property type="match status" value="1"/>
</dbReference>
<dbReference type="PROSITE" id="PS00358">
    <property type="entry name" value="RIBOSOMAL_L5"/>
    <property type="match status" value="1"/>
</dbReference>
<evidence type="ECO:0000255" key="1">
    <source>
        <dbReference type="HAMAP-Rule" id="MF_01333"/>
    </source>
</evidence>
<evidence type="ECO:0000305" key="2"/>
<gene>
    <name evidence="1" type="primary">rplE</name>
    <name type="ordered locus">Pnap_0332</name>
</gene>
<proteinExistence type="inferred from homology"/>